<comment type="function">
    <text evidence="1">Involved in the biosynthesis of lipid A, a phosphorylated glycolipid that anchors the lipopolysaccharide to the outer membrane of the cell.</text>
</comment>
<comment type="catalytic activity">
    <reaction evidence="1">
        <text>a (3R)-hydroxyacyl-[ACP] + UDP-N-acetyl-alpha-D-glucosamine = a UDP-3-O-[(3R)-3-hydroxyacyl]-N-acetyl-alpha-D-glucosamine + holo-[ACP]</text>
        <dbReference type="Rhea" id="RHEA:67812"/>
        <dbReference type="Rhea" id="RHEA-COMP:9685"/>
        <dbReference type="Rhea" id="RHEA-COMP:9945"/>
        <dbReference type="ChEBI" id="CHEBI:57705"/>
        <dbReference type="ChEBI" id="CHEBI:64479"/>
        <dbReference type="ChEBI" id="CHEBI:78827"/>
        <dbReference type="ChEBI" id="CHEBI:173225"/>
        <dbReference type="EC" id="2.3.1.129"/>
    </reaction>
</comment>
<comment type="pathway">
    <text evidence="1">Glycolipid biosynthesis; lipid IV(A) biosynthesis; lipid IV(A) from (3R)-3-hydroxytetradecanoyl-[acyl-carrier-protein] and UDP-N-acetyl-alpha-D-glucosamine: step 1/6.</text>
</comment>
<comment type="subunit">
    <text evidence="1">Homotrimer.</text>
</comment>
<comment type="subcellular location">
    <subcellularLocation>
        <location evidence="1">Cytoplasm</location>
    </subcellularLocation>
</comment>
<comment type="similarity">
    <text evidence="1">Belongs to the transferase hexapeptide repeat family. LpxA subfamily.</text>
</comment>
<protein>
    <recommendedName>
        <fullName evidence="1">Acyl-[acyl-carrier-protein]--UDP-N-acetylglucosamine O-acyltransferase</fullName>
        <shortName evidence="1">UDP-N-acetylglucosamine acyltransferase</shortName>
        <ecNumber evidence="1">2.3.1.129</ecNumber>
    </recommendedName>
</protein>
<evidence type="ECO:0000255" key="1">
    <source>
        <dbReference type="HAMAP-Rule" id="MF_00387"/>
    </source>
</evidence>
<organism>
    <name type="scientific">Histophilus somni (strain 2336)</name>
    <name type="common">Haemophilus somnus</name>
    <dbReference type="NCBI Taxonomy" id="228400"/>
    <lineage>
        <taxon>Bacteria</taxon>
        <taxon>Pseudomonadati</taxon>
        <taxon>Pseudomonadota</taxon>
        <taxon>Gammaproteobacteria</taxon>
        <taxon>Pasteurellales</taxon>
        <taxon>Pasteurellaceae</taxon>
        <taxon>Histophilus</taxon>
    </lineage>
</organism>
<sequence>MIHSTAKIHPSSIIEEGAKIGENVVIGPFCIVGSDVQIGKGTTLHSHVVVKGVTTIGEDNQIFQFASIGEVNQDLKYQGEPTKTIIGHRNRIRESVTIHRGTVQGGGVTRIGDDNLLMINAHIAHDCQIGNRCILANNATLAGHVELGDFVIVGGMSAIHQFVIVGAHVMLGGGSMVSQDVPPYVMAQGNHARPFGVNIEGLKRRGFDKPTLHAIRNVYKLIYRSGKTLEEVIPEIENYAQTESAVSFFLDFFTRSTRGIIR</sequence>
<accession>B0UW61</accession>
<gene>
    <name evidence="1" type="primary">lpxA</name>
    <name type="ordered locus">HSM_0256</name>
</gene>
<name>LPXA_HISS2</name>
<feature type="chain" id="PRO_1000080208" description="Acyl-[acyl-carrier-protein]--UDP-N-acetylglucosamine O-acyltransferase">
    <location>
        <begin position="1"/>
        <end position="262"/>
    </location>
</feature>
<dbReference type="EC" id="2.3.1.129" evidence="1"/>
<dbReference type="EMBL" id="CP000947">
    <property type="protein sequence ID" value="ACA31883.1"/>
    <property type="molecule type" value="Genomic_DNA"/>
</dbReference>
<dbReference type="RefSeq" id="WP_012341126.1">
    <property type="nucleotide sequence ID" value="NC_010519.1"/>
</dbReference>
<dbReference type="SMR" id="B0UW61"/>
<dbReference type="STRING" id="228400.HSM_0256"/>
<dbReference type="GeneID" id="31486536"/>
<dbReference type="KEGG" id="hsm:HSM_0256"/>
<dbReference type="HOGENOM" id="CLU_061249_0_0_6"/>
<dbReference type="UniPathway" id="UPA00359">
    <property type="reaction ID" value="UER00477"/>
</dbReference>
<dbReference type="GO" id="GO:0005737">
    <property type="term" value="C:cytoplasm"/>
    <property type="evidence" value="ECO:0007669"/>
    <property type="project" value="UniProtKB-SubCell"/>
</dbReference>
<dbReference type="GO" id="GO:0016020">
    <property type="term" value="C:membrane"/>
    <property type="evidence" value="ECO:0007669"/>
    <property type="project" value="GOC"/>
</dbReference>
<dbReference type="GO" id="GO:0008780">
    <property type="term" value="F:acyl-[acyl-carrier-protein]-UDP-N-acetylglucosamine O-acyltransferase activity"/>
    <property type="evidence" value="ECO:0007669"/>
    <property type="project" value="UniProtKB-UniRule"/>
</dbReference>
<dbReference type="GO" id="GO:0009245">
    <property type="term" value="P:lipid A biosynthetic process"/>
    <property type="evidence" value="ECO:0007669"/>
    <property type="project" value="UniProtKB-UniRule"/>
</dbReference>
<dbReference type="CDD" id="cd03351">
    <property type="entry name" value="LbH_UDP-GlcNAc_AT"/>
    <property type="match status" value="1"/>
</dbReference>
<dbReference type="FunFam" id="2.160.10.10:FF:000003">
    <property type="entry name" value="Acyl-[acyl-carrier-protein]--UDP-N-acetylglucosamine O-acyltransferase"/>
    <property type="match status" value="1"/>
</dbReference>
<dbReference type="Gene3D" id="2.160.10.10">
    <property type="entry name" value="Hexapeptide repeat proteins"/>
    <property type="match status" value="1"/>
</dbReference>
<dbReference type="Gene3D" id="1.20.1180.10">
    <property type="entry name" value="Udp N-acetylglucosamine O-acyltransferase, C-terminal domain"/>
    <property type="match status" value="1"/>
</dbReference>
<dbReference type="HAMAP" id="MF_00387">
    <property type="entry name" value="LpxA"/>
    <property type="match status" value="1"/>
</dbReference>
<dbReference type="InterPro" id="IPR029098">
    <property type="entry name" value="Acetyltransf_C"/>
</dbReference>
<dbReference type="InterPro" id="IPR037157">
    <property type="entry name" value="Acetyltransf_C_sf"/>
</dbReference>
<dbReference type="InterPro" id="IPR001451">
    <property type="entry name" value="Hexapep"/>
</dbReference>
<dbReference type="InterPro" id="IPR018357">
    <property type="entry name" value="Hexapep_transf_CS"/>
</dbReference>
<dbReference type="InterPro" id="IPR010137">
    <property type="entry name" value="Lipid_A_LpxA"/>
</dbReference>
<dbReference type="InterPro" id="IPR011004">
    <property type="entry name" value="Trimer_LpxA-like_sf"/>
</dbReference>
<dbReference type="NCBIfam" id="TIGR01852">
    <property type="entry name" value="lipid_A_lpxA"/>
    <property type="match status" value="1"/>
</dbReference>
<dbReference type="NCBIfam" id="NF003657">
    <property type="entry name" value="PRK05289.1"/>
    <property type="match status" value="1"/>
</dbReference>
<dbReference type="PANTHER" id="PTHR43480">
    <property type="entry name" value="ACYL-[ACYL-CARRIER-PROTEIN]--UDP-N-ACETYLGLUCOSAMINE O-ACYLTRANSFERASE"/>
    <property type="match status" value="1"/>
</dbReference>
<dbReference type="PANTHER" id="PTHR43480:SF1">
    <property type="entry name" value="ACYL-[ACYL-CARRIER-PROTEIN]--UDP-N-ACETYLGLUCOSAMINE O-ACYLTRANSFERASE, MITOCHONDRIAL-RELATED"/>
    <property type="match status" value="1"/>
</dbReference>
<dbReference type="Pfam" id="PF13720">
    <property type="entry name" value="Acetyltransf_11"/>
    <property type="match status" value="1"/>
</dbReference>
<dbReference type="Pfam" id="PF00132">
    <property type="entry name" value="Hexapep"/>
    <property type="match status" value="2"/>
</dbReference>
<dbReference type="PIRSF" id="PIRSF000456">
    <property type="entry name" value="UDP-GlcNAc_acltr"/>
    <property type="match status" value="1"/>
</dbReference>
<dbReference type="SUPFAM" id="SSF51161">
    <property type="entry name" value="Trimeric LpxA-like enzymes"/>
    <property type="match status" value="1"/>
</dbReference>
<dbReference type="PROSITE" id="PS00101">
    <property type="entry name" value="HEXAPEP_TRANSFERASES"/>
    <property type="match status" value="3"/>
</dbReference>
<proteinExistence type="inferred from homology"/>
<keyword id="KW-0012">Acyltransferase</keyword>
<keyword id="KW-0963">Cytoplasm</keyword>
<keyword id="KW-0441">Lipid A biosynthesis</keyword>
<keyword id="KW-0444">Lipid biosynthesis</keyword>
<keyword id="KW-0443">Lipid metabolism</keyword>
<keyword id="KW-0677">Repeat</keyword>
<keyword id="KW-0808">Transferase</keyword>
<reference key="1">
    <citation type="submission" date="2008-02" db="EMBL/GenBank/DDBJ databases">
        <title>Complete sequence of Haemophilus somnus 2336.</title>
        <authorList>
            <consortium name="US DOE Joint Genome Institute"/>
            <person name="Siddaramappa S."/>
            <person name="Duncan A.J."/>
            <person name="Challacombe J.F."/>
            <person name="Rainey D."/>
            <person name="Gillaspy A.F."/>
            <person name="Carson M."/>
            <person name="Gipson J."/>
            <person name="Gipson M."/>
            <person name="Bruce D."/>
            <person name="Detter J.C."/>
            <person name="Han C.S."/>
            <person name="Land M."/>
            <person name="Tapia R."/>
            <person name="Thompson L.S."/>
            <person name="Orvis J."/>
            <person name="Zaitshik J."/>
            <person name="Barnes G."/>
            <person name="Brettin T.S."/>
            <person name="Dyer D.W."/>
            <person name="Inzana T.J."/>
        </authorList>
    </citation>
    <scope>NUCLEOTIDE SEQUENCE [LARGE SCALE GENOMIC DNA]</scope>
    <source>
        <strain>2336</strain>
    </source>
</reference>